<feature type="chain" id="PRO_1000193639" description="Gamma-glutamyl phosphate reductase">
    <location>
        <begin position="1"/>
        <end position="426"/>
    </location>
</feature>
<accession>B2UC98</accession>
<name>PROA_RALPJ</name>
<protein>
    <recommendedName>
        <fullName evidence="1">Gamma-glutamyl phosphate reductase</fullName>
        <shortName evidence="1">GPR</shortName>
        <ecNumber evidence="1">1.2.1.41</ecNumber>
    </recommendedName>
    <alternativeName>
        <fullName evidence="1">Glutamate-5-semialdehyde dehydrogenase</fullName>
    </alternativeName>
    <alternativeName>
        <fullName evidence="1">Glutamyl-gamma-semialdehyde dehydrogenase</fullName>
        <shortName evidence="1">GSA dehydrogenase</shortName>
    </alternativeName>
</protein>
<sequence length="426" mass="45657">MKQLDVNEYMALVGRQARTASRGMARAGTAQKNRALLHIAAAVRRDAAKLKEINARDVERARANGQDAAFIDRLTLTDRAIDTMAAGLEQIAALPDPIGEISNMKFRPTGIQVGQMRVPLGVIGIIYESRPNVTVDAAALCIKSGNATILRGGSEAIESNGALAALIEEGLADAGLPANAVQVVATTDRAAVGKLITMTEYVDVIVPRGGKSLIARLIEEARVPMIKHLDGICHVYIDADADIEKAVRVCDNAKTQRYAPCNTMETLLVSRDVAARALPPLARIYQDKGVELRVCPGTRATLEAAGFGNLKDAVEADWHTEYLAPILSIRTVDGLDAAIEHINTYGSAHTDSIITENYSTGMRFLREVDSASVMINASTRFADGFEYGLGAEIGISNDKLHARGPVGLEGLTSLKYVVFGHGEIRT</sequence>
<comment type="function">
    <text evidence="1">Catalyzes the NADPH-dependent reduction of L-glutamate 5-phosphate into L-glutamate 5-semialdehyde and phosphate. The product spontaneously undergoes cyclization to form 1-pyrroline-5-carboxylate.</text>
</comment>
<comment type="catalytic activity">
    <reaction evidence="1">
        <text>L-glutamate 5-semialdehyde + phosphate + NADP(+) = L-glutamyl 5-phosphate + NADPH + H(+)</text>
        <dbReference type="Rhea" id="RHEA:19541"/>
        <dbReference type="ChEBI" id="CHEBI:15378"/>
        <dbReference type="ChEBI" id="CHEBI:43474"/>
        <dbReference type="ChEBI" id="CHEBI:57783"/>
        <dbReference type="ChEBI" id="CHEBI:58066"/>
        <dbReference type="ChEBI" id="CHEBI:58274"/>
        <dbReference type="ChEBI" id="CHEBI:58349"/>
        <dbReference type="EC" id="1.2.1.41"/>
    </reaction>
</comment>
<comment type="pathway">
    <text evidence="1">Amino-acid biosynthesis; L-proline biosynthesis; L-glutamate 5-semialdehyde from L-glutamate: step 2/2.</text>
</comment>
<comment type="subcellular location">
    <subcellularLocation>
        <location evidence="1">Cytoplasm</location>
    </subcellularLocation>
</comment>
<comment type="similarity">
    <text evidence="1">Belongs to the gamma-glutamyl phosphate reductase family.</text>
</comment>
<evidence type="ECO:0000255" key="1">
    <source>
        <dbReference type="HAMAP-Rule" id="MF_00412"/>
    </source>
</evidence>
<proteinExistence type="inferred from homology"/>
<gene>
    <name evidence="1" type="primary">proA</name>
    <name type="ordered locus">Rpic_2980</name>
</gene>
<reference key="1">
    <citation type="submission" date="2008-05" db="EMBL/GenBank/DDBJ databases">
        <title>Complete sequence of chromosome 1 of Ralstonia pickettii 12J.</title>
        <authorList>
            <person name="Lucas S."/>
            <person name="Copeland A."/>
            <person name="Lapidus A."/>
            <person name="Glavina del Rio T."/>
            <person name="Dalin E."/>
            <person name="Tice H."/>
            <person name="Bruce D."/>
            <person name="Goodwin L."/>
            <person name="Pitluck S."/>
            <person name="Meincke L."/>
            <person name="Brettin T."/>
            <person name="Detter J.C."/>
            <person name="Han C."/>
            <person name="Kuske C.R."/>
            <person name="Schmutz J."/>
            <person name="Larimer F."/>
            <person name="Land M."/>
            <person name="Hauser L."/>
            <person name="Kyrpides N."/>
            <person name="Mikhailova N."/>
            <person name="Marsh T."/>
            <person name="Richardson P."/>
        </authorList>
    </citation>
    <scope>NUCLEOTIDE SEQUENCE [LARGE SCALE GENOMIC DNA]</scope>
    <source>
        <strain>12J</strain>
    </source>
</reference>
<organism>
    <name type="scientific">Ralstonia pickettii (strain 12J)</name>
    <dbReference type="NCBI Taxonomy" id="402626"/>
    <lineage>
        <taxon>Bacteria</taxon>
        <taxon>Pseudomonadati</taxon>
        <taxon>Pseudomonadota</taxon>
        <taxon>Betaproteobacteria</taxon>
        <taxon>Burkholderiales</taxon>
        <taxon>Burkholderiaceae</taxon>
        <taxon>Ralstonia</taxon>
    </lineage>
</organism>
<dbReference type="EC" id="1.2.1.41" evidence="1"/>
<dbReference type="EMBL" id="CP001068">
    <property type="protein sequence ID" value="ACD28103.1"/>
    <property type="molecule type" value="Genomic_DNA"/>
</dbReference>
<dbReference type="SMR" id="B2UC98"/>
<dbReference type="STRING" id="402626.Rpic_2980"/>
<dbReference type="KEGG" id="rpi:Rpic_2980"/>
<dbReference type="PATRIC" id="fig|402626.5.peg.4116"/>
<dbReference type="eggNOG" id="COG0014">
    <property type="taxonomic scope" value="Bacteria"/>
</dbReference>
<dbReference type="HOGENOM" id="CLU_030231_0_0_4"/>
<dbReference type="UniPathway" id="UPA00098">
    <property type="reaction ID" value="UER00360"/>
</dbReference>
<dbReference type="GO" id="GO:0005737">
    <property type="term" value="C:cytoplasm"/>
    <property type="evidence" value="ECO:0007669"/>
    <property type="project" value="UniProtKB-SubCell"/>
</dbReference>
<dbReference type="GO" id="GO:0004350">
    <property type="term" value="F:glutamate-5-semialdehyde dehydrogenase activity"/>
    <property type="evidence" value="ECO:0007669"/>
    <property type="project" value="UniProtKB-UniRule"/>
</dbReference>
<dbReference type="GO" id="GO:0050661">
    <property type="term" value="F:NADP binding"/>
    <property type="evidence" value="ECO:0007669"/>
    <property type="project" value="InterPro"/>
</dbReference>
<dbReference type="GO" id="GO:0055129">
    <property type="term" value="P:L-proline biosynthetic process"/>
    <property type="evidence" value="ECO:0007669"/>
    <property type="project" value="UniProtKB-UniRule"/>
</dbReference>
<dbReference type="CDD" id="cd07079">
    <property type="entry name" value="ALDH_F18-19_ProA-GPR"/>
    <property type="match status" value="1"/>
</dbReference>
<dbReference type="FunFam" id="3.40.309.10:FF:000006">
    <property type="entry name" value="Gamma-glutamyl phosphate reductase"/>
    <property type="match status" value="1"/>
</dbReference>
<dbReference type="Gene3D" id="3.40.605.10">
    <property type="entry name" value="Aldehyde Dehydrogenase, Chain A, domain 1"/>
    <property type="match status" value="1"/>
</dbReference>
<dbReference type="Gene3D" id="3.40.309.10">
    <property type="entry name" value="Aldehyde Dehydrogenase, Chain A, domain 2"/>
    <property type="match status" value="1"/>
</dbReference>
<dbReference type="HAMAP" id="MF_00412">
    <property type="entry name" value="ProA"/>
    <property type="match status" value="1"/>
</dbReference>
<dbReference type="InterPro" id="IPR016161">
    <property type="entry name" value="Ald_DH/histidinol_DH"/>
</dbReference>
<dbReference type="InterPro" id="IPR016163">
    <property type="entry name" value="Ald_DH_C"/>
</dbReference>
<dbReference type="InterPro" id="IPR016162">
    <property type="entry name" value="Ald_DH_N"/>
</dbReference>
<dbReference type="InterPro" id="IPR015590">
    <property type="entry name" value="Aldehyde_DH_dom"/>
</dbReference>
<dbReference type="InterPro" id="IPR020593">
    <property type="entry name" value="G-glutamylP_reductase_CS"/>
</dbReference>
<dbReference type="InterPro" id="IPR012134">
    <property type="entry name" value="Glu-5-SA_DH"/>
</dbReference>
<dbReference type="InterPro" id="IPR000965">
    <property type="entry name" value="GPR_dom"/>
</dbReference>
<dbReference type="NCBIfam" id="NF001221">
    <property type="entry name" value="PRK00197.1"/>
    <property type="match status" value="1"/>
</dbReference>
<dbReference type="NCBIfam" id="TIGR00407">
    <property type="entry name" value="proA"/>
    <property type="match status" value="1"/>
</dbReference>
<dbReference type="PANTHER" id="PTHR11063:SF8">
    <property type="entry name" value="DELTA-1-PYRROLINE-5-CARBOXYLATE SYNTHASE"/>
    <property type="match status" value="1"/>
</dbReference>
<dbReference type="PANTHER" id="PTHR11063">
    <property type="entry name" value="GLUTAMATE SEMIALDEHYDE DEHYDROGENASE"/>
    <property type="match status" value="1"/>
</dbReference>
<dbReference type="Pfam" id="PF00171">
    <property type="entry name" value="Aldedh"/>
    <property type="match status" value="2"/>
</dbReference>
<dbReference type="PIRSF" id="PIRSF000151">
    <property type="entry name" value="GPR"/>
    <property type="match status" value="1"/>
</dbReference>
<dbReference type="SUPFAM" id="SSF53720">
    <property type="entry name" value="ALDH-like"/>
    <property type="match status" value="1"/>
</dbReference>
<dbReference type="PROSITE" id="PS01223">
    <property type="entry name" value="PROA"/>
    <property type="match status" value="1"/>
</dbReference>
<keyword id="KW-0028">Amino-acid biosynthesis</keyword>
<keyword id="KW-0963">Cytoplasm</keyword>
<keyword id="KW-0521">NADP</keyword>
<keyword id="KW-0560">Oxidoreductase</keyword>
<keyword id="KW-0641">Proline biosynthesis</keyword>